<protein>
    <recommendedName>
        <fullName evidence="1">Adenylate kinase</fullName>
        <ecNumber evidence="1">2.7.4.3</ecNumber>
    </recommendedName>
    <alternativeName>
        <fullName evidence="1">ATP-AMP transphosphorylase</fullName>
    </alternativeName>
    <alternativeName>
        <fullName evidence="1">ATP:AMP phosphotransferase</fullName>
    </alternativeName>
    <alternativeName>
        <fullName evidence="1">Adenylate kinase cytosolic and mitochondrial</fullName>
    </alternativeName>
    <alternativeName>
        <fullName evidence="1">Adenylate monophosphate kinase</fullName>
    </alternativeName>
</protein>
<comment type="function">
    <text evidence="1">Catalyzes the reversible transfer of the terminal phosphate group between ATP and AMP. Plays an important role in cellular energy homeostasis and in adenine nucleotide metabolism. Adenylate kinase activity is critical for regulation of the phosphate utilization and the AMP de novo biosynthesis pathways.</text>
</comment>
<comment type="catalytic activity">
    <reaction evidence="1">
        <text>AMP + ATP = 2 ADP</text>
        <dbReference type="Rhea" id="RHEA:12973"/>
        <dbReference type="ChEBI" id="CHEBI:30616"/>
        <dbReference type="ChEBI" id="CHEBI:456215"/>
        <dbReference type="ChEBI" id="CHEBI:456216"/>
        <dbReference type="EC" id="2.7.4.3"/>
    </reaction>
</comment>
<comment type="subunit">
    <text evidence="1">Monomer.</text>
</comment>
<comment type="subcellular location">
    <subcellularLocation>
        <location evidence="1">Cytoplasm</location>
        <location evidence="1">Cytosol</location>
    </subcellularLocation>
    <subcellularLocation>
        <location evidence="1">Mitochondrion intermembrane space</location>
    </subcellularLocation>
    <text evidence="1">Predominantly mitochondrial.</text>
</comment>
<comment type="domain">
    <text evidence="1">Consists of three domains, a large central CORE domain and two small peripheral domains, NMPbind and LID, which undergo movements during catalysis. The LID domain closes over the site of phosphoryl transfer upon ATP binding. Assembling and dissambling the active center during each catalytic cycle provides an effective means to prevent ATP hydrolysis.</text>
</comment>
<comment type="similarity">
    <text evidence="1">Belongs to the adenylate kinase family. AK2 subfamily.</text>
</comment>
<comment type="sequence caution" evidence="2">
    <conflict type="erroneous initiation">
        <sequence resource="EMBL-CDS" id="CAG82569"/>
    </conflict>
</comment>
<proteinExistence type="inferred from homology"/>
<evidence type="ECO:0000255" key="1">
    <source>
        <dbReference type="HAMAP-Rule" id="MF_03168"/>
    </source>
</evidence>
<evidence type="ECO:0000305" key="2"/>
<dbReference type="EC" id="2.7.4.3" evidence="1"/>
<dbReference type="EMBL" id="CR382128">
    <property type="protein sequence ID" value="CAG82569.1"/>
    <property type="status" value="ALT_INIT"/>
    <property type="molecule type" value="Genomic_DNA"/>
</dbReference>
<dbReference type="RefSeq" id="XP_500355.1">
    <property type="nucleotide sequence ID" value="XM_500355.1"/>
</dbReference>
<dbReference type="SMR" id="Q6CG57"/>
<dbReference type="FunCoup" id="Q6CG57">
    <property type="interactions" value="873"/>
</dbReference>
<dbReference type="STRING" id="284591.Q6CG57"/>
<dbReference type="KEGG" id="yli:2907367"/>
<dbReference type="InParanoid" id="Q6CG57"/>
<dbReference type="OrthoDB" id="82at4891"/>
<dbReference type="Proteomes" id="UP000001300">
    <property type="component" value="Chromosome B"/>
</dbReference>
<dbReference type="GO" id="GO:0005737">
    <property type="term" value="C:cytoplasm"/>
    <property type="evidence" value="ECO:0000318"/>
    <property type="project" value="GO_Central"/>
</dbReference>
<dbReference type="GO" id="GO:0005829">
    <property type="term" value="C:cytosol"/>
    <property type="evidence" value="ECO:0007669"/>
    <property type="project" value="UniProtKB-SubCell"/>
</dbReference>
<dbReference type="GO" id="GO:0005758">
    <property type="term" value="C:mitochondrial intermembrane space"/>
    <property type="evidence" value="ECO:0007669"/>
    <property type="project" value="UniProtKB-SubCell"/>
</dbReference>
<dbReference type="GO" id="GO:0005739">
    <property type="term" value="C:mitochondrion"/>
    <property type="evidence" value="ECO:0000318"/>
    <property type="project" value="GO_Central"/>
</dbReference>
<dbReference type="GO" id="GO:0004017">
    <property type="term" value="F:adenylate kinase activity"/>
    <property type="evidence" value="ECO:0000318"/>
    <property type="project" value="GO_Central"/>
</dbReference>
<dbReference type="GO" id="GO:0005524">
    <property type="term" value="F:ATP binding"/>
    <property type="evidence" value="ECO:0007669"/>
    <property type="project" value="UniProtKB-KW"/>
</dbReference>
<dbReference type="GO" id="GO:0006172">
    <property type="term" value="P:ADP biosynthetic process"/>
    <property type="evidence" value="ECO:0000318"/>
    <property type="project" value="GO_Central"/>
</dbReference>
<dbReference type="GO" id="GO:0046033">
    <property type="term" value="P:AMP metabolic process"/>
    <property type="evidence" value="ECO:0007669"/>
    <property type="project" value="UniProtKB-UniRule"/>
</dbReference>
<dbReference type="GO" id="GO:0046034">
    <property type="term" value="P:ATP metabolic process"/>
    <property type="evidence" value="ECO:0007669"/>
    <property type="project" value="UniProtKB-UniRule"/>
</dbReference>
<dbReference type="CDD" id="cd01428">
    <property type="entry name" value="ADK"/>
    <property type="match status" value="1"/>
</dbReference>
<dbReference type="FunFam" id="3.40.50.300:FF:000106">
    <property type="entry name" value="Adenylate kinase mitochondrial"/>
    <property type="match status" value="1"/>
</dbReference>
<dbReference type="Gene3D" id="3.40.50.300">
    <property type="entry name" value="P-loop containing nucleotide triphosphate hydrolases"/>
    <property type="match status" value="1"/>
</dbReference>
<dbReference type="HAMAP" id="MF_00235">
    <property type="entry name" value="Adenylate_kinase_Adk"/>
    <property type="match status" value="1"/>
</dbReference>
<dbReference type="HAMAP" id="MF_03168">
    <property type="entry name" value="Adenylate_kinase_AK2"/>
    <property type="match status" value="1"/>
</dbReference>
<dbReference type="InterPro" id="IPR006259">
    <property type="entry name" value="Adenyl_kin_sub"/>
</dbReference>
<dbReference type="InterPro" id="IPR000850">
    <property type="entry name" value="Adenylat/UMP-CMP_kin"/>
</dbReference>
<dbReference type="InterPro" id="IPR033690">
    <property type="entry name" value="Adenylat_kinase_CS"/>
</dbReference>
<dbReference type="InterPro" id="IPR007862">
    <property type="entry name" value="Adenylate_kinase_lid-dom"/>
</dbReference>
<dbReference type="InterPro" id="IPR028587">
    <property type="entry name" value="AK2"/>
</dbReference>
<dbReference type="InterPro" id="IPR027417">
    <property type="entry name" value="P-loop_NTPase"/>
</dbReference>
<dbReference type="NCBIfam" id="TIGR01351">
    <property type="entry name" value="adk"/>
    <property type="match status" value="1"/>
</dbReference>
<dbReference type="NCBIfam" id="NF001380">
    <property type="entry name" value="PRK00279.1-2"/>
    <property type="match status" value="1"/>
</dbReference>
<dbReference type="NCBIfam" id="NF001381">
    <property type="entry name" value="PRK00279.1-3"/>
    <property type="match status" value="1"/>
</dbReference>
<dbReference type="NCBIfam" id="NF011100">
    <property type="entry name" value="PRK14527.1"/>
    <property type="match status" value="1"/>
</dbReference>
<dbReference type="PANTHER" id="PTHR23359">
    <property type="entry name" value="NUCLEOTIDE KINASE"/>
    <property type="match status" value="1"/>
</dbReference>
<dbReference type="Pfam" id="PF00406">
    <property type="entry name" value="ADK"/>
    <property type="match status" value="1"/>
</dbReference>
<dbReference type="Pfam" id="PF05191">
    <property type="entry name" value="ADK_lid"/>
    <property type="match status" value="1"/>
</dbReference>
<dbReference type="PRINTS" id="PR00094">
    <property type="entry name" value="ADENYLTKNASE"/>
</dbReference>
<dbReference type="SUPFAM" id="SSF52540">
    <property type="entry name" value="P-loop containing nucleoside triphosphate hydrolases"/>
    <property type="match status" value="1"/>
</dbReference>
<dbReference type="PROSITE" id="PS00113">
    <property type="entry name" value="ADENYLATE_KINASE"/>
    <property type="match status" value="1"/>
</dbReference>
<organism>
    <name type="scientific">Yarrowia lipolytica (strain CLIB 122 / E 150)</name>
    <name type="common">Yeast</name>
    <name type="synonym">Candida lipolytica</name>
    <dbReference type="NCBI Taxonomy" id="284591"/>
    <lineage>
        <taxon>Eukaryota</taxon>
        <taxon>Fungi</taxon>
        <taxon>Dikarya</taxon>
        <taxon>Ascomycota</taxon>
        <taxon>Saccharomycotina</taxon>
        <taxon>Dipodascomycetes</taxon>
        <taxon>Dipodascales</taxon>
        <taxon>Dipodascales incertae sedis</taxon>
        <taxon>Yarrowia</taxon>
    </lineage>
</organism>
<gene>
    <name evidence="1" type="primary">ADK1</name>
    <name type="ordered locus">YALI0B00704g</name>
</gene>
<keyword id="KW-0067">ATP-binding</keyword>
<keyword id="KW-0963">Cytoplasm</keyword>
<keyword id="KW-0418">Kinase</keyword>
<keyword id="KW-0496">Mitochondrion</keyword>
<keyword id="KW-0547">Nucleotide-binding</keyword>
<keyword id="KW-1185">Reference proteome</keyword>
<keyword id="KW-0808">Transferase</keyword>
<reference key="1">
    <citation type="journal article" date="2004" name="Nature">
        <title>Genome evolution in yeasts.</title>
        <authorList>
            <person name="Dujon B."/>
            <person name="Sherman D."/>
            <person name="Fischer G."/>
            <person name="Durrens P."/>
            <person name="Casaregola S."/>
            <person name="Lafontaine I."/>
            <person name="de Montigny J."/>
            <person name="Marck C."/>
            <person name="Neuveglise C."/>
            <person name="Talla E."/>
            <person name="Goffard N."/>
            <person name="Frangeul L."/>
            <person name="Aigle M."/>
            <person name="Anthouard V."/>
            <person name="Babour A."/>
            <person name="Barbe V."/>
            <person name="Barnay S."/>
            <person name="Blanchin S."/>
            <person name="Beckerich J.-M."/>
            <person name="Beyne E."/>
            <person name="Bleykasten C."/>
            <person name="Boisrame A."/>
            <person name="Boyer J."/>
            <person name="Cattolico L."/>
            <person name="Confanioleri F."/>
            <person name="de Daruvar A."/>
            <person name="Despons L."/>
            <person name="Fabre E."/>
            <person name="Fairhead C."/>
            <person name="Ferry-Dumazet H."/>
            <person name="Groppi A."/>
            <person name="Hantraye F."/>
            <person name="Hennequin C."/>
            <person name="Jauniaux N."/>
            <person name="Joyet P."/>
            <person name="Kachouri R."/>
            <person name="Kerrest A."/>
            <person name="Koszul R."/>
            <person name="Lemaire M."/>
            <person name="Lesur I."/>
            <person name="Ma L."/>
            <person name="Muller H."/>
            <person name="Nicaud J.-M."/>
            <person name="Nikolski M."/>
            <person name="Oztas S."/>
            <person name="Ozier-Kalogeropoulos O."/>
            <person name="Pellenz S."/>
            <person name="Potier S."/>
            <person name="Richard G.-F."/>
            <person name="Straub M.-L."/>
            <person name="Suleau A."/>
            <person name="Swennen D."/>
            <person name="Tekaia F."/>
            <person name="Wesolowski-Louvel M."/>
            <person name="Westhof E."/>
            <person name="Wirth B."/>
            <person name="Zeniou-Meyer M."/>
            <person name="Zivanovic Y."/>
            <person name="Bolotin-Fukuhara M."/>
            <person name="Thierry A."/>
            <person name="Bouchier C."/>
            <person name="Caudron B."/>
            <person name="Scarpelli C."/>
            <person name="Gaillardin C."/>
            <person name="Weissenbach J."/>
            <person name="Wincker P."/>
            <person name="Souciet J.-L."/>
        </authorList>
    </citation>
    <scope>NUCLEOTIDE SEQUENCE [LARGE SCALE GENOMIC DNA]</scope>
    <source>
        <strain>CLIB 122 / E 150</strain>
    </source>
</reference>
<name>KAD2_YARLI</name>
<sequence>MSTIEDLKATVERLAARVHELEASAKSKIAPEVPKSIRMVLIGPPGAGKGTQAPNLVEKYCACHLATGDMLRSQVQQQTPLGVEAKKIMDAGGLVSDDIMVNMIRSELENNSKCKNGFILDGFPRTIPQAEKLDEMLAEKKQPLEKAVELKIPDDLLVARITGRLVHPASGRSYHKVFNPPKKEMIDDITGEALVQRSDDNADALKKRLVSFHKQTEPIVGYYQKTGIWKGVDAAQDPKKVWGDILKCLGQ</sequence>
<feature type="chain" id="PRO_0000365690" description="Adenylate kinase">
    <location>
        <begin position="1"/>
        <end position="251"/>
    </location>
</feature>
<feature type="region of interest" description="NMP" evidence="1">
    <location>
        <begin position="66"/>
        <end position="95"/>
    </location>
</feature>
<feature type="region of interest" description="LID" evidence="1">
    <location>
        <begin position="163"/>
        <end position="200"/>
    </location>
</feature>
<feature type="binding site" evidence="1">
    <location>
        <begin position="46"/>
        <end position="51"/>
    </location>
    <ligand>
        <name>ATP</name>
        <dbReference type="ChEBI" id="CHEBI:30616"/>
    </ligand>
</feature>
<feature type="binding site" evidence="1">
    <location>
        <position position="67"/>
    </location>
    <ligand>
        <name>AMP</name>
        <dbReference type="ChEBI" id="CHEBI:456215"/>
    </ligand>
</feature>
<feature type="binding site" evidence="1">
    <location>
        <position position="72"/>
    </location>
    <ligand>
        <name>AMP</name>
        <dbReference type="ChEBI" id="CHEBI:456215"/>
    </ligand>
</feature>
<feature type="binding site" evidence="1">
    <location>
        <begin position="93"/>
        <end position="95"/>
    </location>
    <ligand>
        <name>AMP</name>
        <dbReference type="ChEBI" id="CHEBI:456215"/>
    </ligand>
</feature>
<feature type="binding site" evidence="1">
    <location>
        <begin position="122"/>
        <end position="125"/>
    </location>
    <ligand>
        <name>AMP</name>
        <dbReference type="ChEBI" id="CHEBI:456215"/>
    </ligand>
</feature>
<feature type="binding site" evidence="1">
    <location>
        <position position="129"/>
    </location>
    <ligand>
        <name>AMP</name>
        <dbReference type="ChEBI" id="CHEBI:456215"/>
    </ligand>
</feature>
<feature type="binding site" evidence="1">
    <location>
        <position position="164"/>
    </location>
    <ligand>
        <name>ATP</name>
        <dbReference type="ChEBI" id="CHEBI:30616"/>
    </ligand>
</feature>
<feature type="binding site" evidence="1">
    <location>
        <begin position="173"/>
        <end position="174"/>
    </location>
    <ligand>
        <name>ATP</name>
        <dbReference type="ChEBI" id="CHEBI:30616"/>
    </ligand>
</feature>
<feature type="binding site" evidence="1">
    <location>
        <position position="197"/>
    </location>
    <ligand>
        <name>AMP</name>
        <dbReference type="ChEBI" id="CHEBI:456215"/>
    </ligand>
</feature>
<feature type="binding site" evidence="1">
    <location>
        <position position="208"/>
    </location>
    <ligand>
        <name>AMP</name>
        <dbReference type="ChEBI" id="CHEBI:456215"/>
    </ligand>
</feature>
<feature type="binding site" evidence="1">
    <location>
        <position position="236"/>
    </location>
    <ligand>
        <name>ATP</name>
        <dbReference type="ChEBI" id="CHEBI:30616"/>
    </ligand>
</feature>
<accession>Q6CG57</accession>